<reference key="1">
    <citation type="submission" date="2007-11" db="EMBL/GenBank/DDBJ databases">
        <authorList>
            <consortium name="The Salmonella enterica serovar Arizonae Genome Sequencing Project"/>
            <person name="McClelland M."/>
            <person name="Sanderson E.K."/>
            <person name="Porwollik S."/>
            <person name="Spieth J."/>
            <person name="Clifton W.S."/>
            <person name="Fulton R."/>
            <person name="Chunyan W."/>
            <person name="Wollam A."/>
            <person name="Shah N."/>
            <person name="Pepin K."/>
            <person name="Bhonagiri V."/>
            <person name="Nash W."/>
            <person name="Johnson M."/>
            <person name="Thiruvilangam P."/>
            <person name="Wilson R."/>
        </authorList>
    </citation>
    <scope>NUCLEOTIDE SEQUENCE [LARGE SCALE GENOMIC DNA]</scope>
    <source>
        <strain>ATCC BAA-731 / CDC346-86 / RSK2980</strain>
    </source>
</reference>
<feature type="chain" id="PRO_1000075616" description="Translation initiation factor IF-2">
    <location>
        <begin position="1"/>
        <end position="893"/>
    </location>
</feature>
<feature type="domain" description="tr-type G">
    <location>
        <begin position="392"/>
        <end position="561"/>
    </location>
</feature>
<feature type="region of interest" description="Disordered" evidence="3">
    <location>
        <begin position="49"/>
        <end position="303"/>
    </location>
</feature>
<feature type="region of interest" description="G1" evidence="1">
    <location>
        <begin position="401"/>
        <end position="408"/>
    </location>
</feature>
<feature type="region of interest" description="G2" evidence="1">
    <location>
        <begin position="426"/>
        <end position="430"/>
    </location>
</feature>
<feature type="region of interest" description="G3" evidence="1">
    <location>
        <begin position="447"/>
        <end position="450"/>
    </location>
</feature>
<feature type="region of interest" description="G4" evidence="1">
    <location>
        <begin position="501"/>
        <end position="504"/>
    </location>
</feature>
<feature type="region of interest" description="G5" evidence="1">
    <location>
        <begin position="537"/>
        <end position="539"/>
    </location>
</feature>
<feature type="compositionally biased region" description="Polar residues" evidence="3">
    <location>
        <begin position="68"/>
        <end position="82"/>
    </location>
</feature>
<feature type="compositionally biased region" description="Basic and acidic residues" evidence="3">
    <location>
        <begin position="93"/>
        <end position="159"/>
    </location>
</feature>
<feature type="compositionally biased region" description="Basic and acidic residues" evidence="3">
    <location>
        <begin position="166"/>
        <end position="216"/>
    </location>
</feature>
<feature type="compositionally biased region" description="Basic residues" evidence="3">
    <location>
        <begin position="254"/>
        <end position="269"/>
    </location>
</feature>
<feature type="compositionally biased region" description="Basic and acidic residues" evidence="3">
    <location>
        <begin position="270"/>
        <end position="283"/>
    </location>
</feature>
<feature type="binding site" evidence="2">
    <location>
        <begin position="401"/>
        <end position="408"/>
    </location>
    <ligand>
        <name>GTP</name>
        <dbReference type="ChEBI" id="CHEBI:37565"/>
    </ligand>
</feature>
<feature type="binding site" evidence="2">
    <location>
        <begin position="447"/>
        <end position="451"/>
    </location>
    <ligand>
        <name>GTP</name>
        <dbReference type="ChEBI" id="CHEBI:37565"/>
    </ligand>
</feature>
<feature type="binding site" evidence="2">
    <location>
        <begin position="501"/>
        <end position="504"/>
    </location>
    <ligand>
        <name>GTP</name>
        <dbReference type="ChEBI" id="CHEBI:37565"/>
    </ligand>
</feature>
<dbReference type="EMBL" id="CP000880">
    <property type="protein sequence ID" value="ABX24118.1"/>
    <property type="molecule type" value="Genomic_DNA"/>
</dbReference>
<dbReference type="SMR" id="A9MP36"/>
<dbReference type="STRING" id="41514.SARI_04338"/>
<dbReference type="KEGG" id="ses:SARI_04338"/>
<dbReference type="HOGENOM" id="CLU_006301_6_3_6"/>
<dbReference type="Proteomes" id="UP000002084">
    <property type="component" value="Chromosome"/>
</dbReference>
<dbReference type="GO" id="GO:0005829">
    <property type="term" value="C:cytosol"/>
    <property type="evidence" value="ECO:0007669"/>
    <property type="project" value="TreeGrafter"/>
</dbReference>
<dbReference type="GO" id="GO:0005525">
    <property type="term" value="F:GTP binding"/>
    <property type="evidence" value="ECO:0007669"/>
    <property type="project" value="UniProtKB-KW"/>
</dbReference>
<dbReference type="GO" id="GO:0003924">
    <property type="term" value="F:GTPase activity"/>
    <property type="evidence" value="ECO:0007669"/>
    <property type="project" value="UniProtKB-UniRule"/>
</dbReference>
<dbReference type="GO" id="GO:0097216">
    <property type="term" value="F:guanosine tetraphosphate binding"/>
    <property type="evidence" value="ECO:0007669"/>
    <property type="project" value="UniProtKB-ARBA"/>
</dbReference>
<dbReference type="GO" id="GO:0003743">
    <property type="term" value="F:translation initiation factor activity"/>
    <property type="evidence" value="ECO:0007669"/>
    <property type="project" value="UniProtKB-UniRule"/>
</dbReference>
<dbReference type="CDD" id="cd01887">
    <property type="entry name" value="IF2_eIF5B"/>
    <property type="match status" value="1"/>
</dbReference>
<dbReference type="CDD" id="cd03702">
    <property type="entry name" value="IF2_mtIF2_II"/>
    <property type="match status" value="1"/>
</dbReference>
<dbReference type="CDD" id="cd03692">
    <property type="entry name" value="mtIF2_IVc"/>
    <property type="match status" value="1"/>
</dbReference>
<dbReference type="FunFam" id="2.40.30.10:FF:000007">
    <property type="entry name" value="Translation initiation factor IF-2"/>
    <property type="match status" value="1"/>
</dbReference>
<dbReference type="FunFam" id="2.40.30.10:FF:000008">
    <property type="entry name" value="Translation initiation factor IF-2"/>
    <property type="match status" value="1"/>
</dbReference>
<dbReference type="FunFam" id="3.30.56.50:FF:000001">
    <property type="entry name" value="Translation initiation factor IF-2"/>
    <property type="match status" value="1"/>
</dbReference>
<dbReference type="FunFam" id="3.40.50.10050:FF:000001">
    <property type="entry name" value="Translation initiation factor IF-2"/>
    <property type="match status" value="1"/>
</dbReference>
<dbReference type="FunFam" id="3.40.50.300:FF:000019">
    <property type="entry name" value="Translation initiation factor IF-2"/>
    <property type="match status" value="1"/>
</dbReference>
<dbReference type="Gene3D" id="3.40.50.300">
    <property type="entry name" value="P-loop containing nucleotide triphosphate hydrolases"/>
    <property type="match status" value="1"/>
</dbReference>
<dbReference type="Gene3D" id="3.30.56.50">
    <property type="entry name" value="Putative DNA-binding domain, N-terminal subdomain of bacterial translation initiation factor IF2"/>
    <property type="match status" value="1"/>
</dbReference>
<dbReference type="Gene3D" id="2.40.30.10">
    <property type="entry name" value="Translation factors"/>
    <property type="match status" value="2"/>
</dbReference>
<dbReference type="Gene3D" id="3.40.50.10050">
    <property type="entry name" value="Translation initiation factor IF- 2, domain 3"/>
    <property type="match status" value="1"/>
</dbReference>
<dbReference type="HAMAP" id="MF_00100_B">
    <property type="entry name" value="IF_2_B"/>
    <property type="match status" value="1"/>
</dbReference>
<dbReference type="InterPro" id="IPR009061">
    <property type="entry name" value="DNA-bd_dom_put_sf"/>
</dbReference>
<dbReference type="InterPro" id="IPR053905">
    <property type="entry name" value="EF-G-like_DII"/>
</dbReference>
<dbReference type="InterPro" id="IPR004161">
    <property type="entry name" value="EFTu-like_2"/>
</dbReference>
<dbReference type="InterPro" id="IPR013575">
    <property type="entry name" value="IF2_assoc_dom_bac"/>
</dbReference>
<dbReference type="InterPro" id="IPR044145">
    <property type="entry name" value="IF2_II"/>
</dbReference>
<dbReference type="InterPro" id="IPR006847">
    <property type="entry name" value="IF2_N"/>
</dbReference>
<dbReference type="InterPro" id="IPR027417">
    <property type="entry name" value="P-loop_NTPase"/>
</dbReference>
<dbReference type="InterPro" id="IPR005225">
    <property type="entry name" value="Small_GTP-bd"/>
</dbReference>
<dbReference type="InterPro" id="IPR000795">
    <property type="entry name" value="T_Tr_GTP-bd_dom"/>
</dbReference>
<dbReference type="InterPro" id="IPR000178">
    <property type="entry name" value="TF_IF2_bacterial-like"/>
</dbReference>
<dbReference type="InterPro" id="IPR015760">
    <property type="entry name" value="TIF_IF2"/>
</dbReference>
<dbReference type="InterPro" id="IPR023115">
    <property type="entry name" value="TIF_IF2_dom3"/>
</dbReference>
<dbReference type="InterPro" id="IPR036925">
    <property type="entry name" value="TIF_IF2_dom3_sf"/>
</dbReference>
<dbReference type="InterPro" id="IPR009000">
    <property type="entry name" value="Transl_B-barrel_sf"/>
</dbReference>
<dbReference type="NCBIfam" id="TIGR00487">
    <property type="entry name" value="IF-2"/>
    <property type="match status" value="1"/>
</dbReference>
<dbReference type="NCBIfam" id="TIGR00231">
    <property type="entry name" value="small_GTP"/>
    <property type="match status" value="1"/>
</dbReference>
<dbReference type="PANTHER" id="PTHR43381:SF5">
    <property type="entry name" value="TR-TYPE G DOMAIN-CONTAINING PROTEIN"/>
    <property type="match status" value="1"/>
</dbReference>
<dbReference type="PANTHER" id="PTHR43381">
    <property type="entry name" value="TRANSLATION INITIATION FACTOR IF-2-RELATED"/>
    <property type="match status" value="1"/>
</dbReference>
<dbReference type="Pfam" id="PF22042">
    <property type="entry name" value="EF-G_D2"/>
    <property type="match status" value="1"/>
</dbReference>
<dbReference type="Pfam" id="PF00009">
    <property type="entry name" value="GTP_EFTU"/>
    <property type="match status" value="1"/>
</dbReference>
<dbReference type="Pfam" id="PF03144">
    <property type="entry name" value="GTP_EFTU_D2"/>
    <property type="match status" value="1"/>
</dbReference>
<dbReference type="Pfam" id="PF11987">
    <property type="entry name" value="IF-2"/>
    <property type="match status" value="1"/>
</dbReference>
<dbReference type="Pfam" id="PF08364">
    <property type="entry name" value="IF2_assoc"/>
    <property type="match status" value="1"/>
</dbReference>
<dbReference type="Pfam" id="PF04760">
    <property type="entry name" value="IF2_N"/>
    <property type="match status" value="2"/>
</dbReference>
<dbReference type="SUPFAM" id="SSF52156">
    <property type="entry name" value="Initiation factor IF2/eIF5b, domain 3"/>
    <property type="match status" value="1"/>
</dbReference>
<dbReference type="SUPFAM" id="SSF52540">
    <property type="entry name" value="P-loop containing nucleoside triphosphate hydrolases"/>
    <property type="match status" value="1"/>
</dbReference>
<dbReference type="SUPFAM" id="SSF46955">
    <property type="entry name" value="Putative DNA-binding domain"/>
    <property type="match status" value="1"/>
</dbReference>
<dbReference type="SUPFAM" id="SSF50447">
    <property type="entry name" value="Translation proteins"/>
    <property type="match status" value="2"/>
</dbReference>
<dbReference type="PROSITE" id="PS51722">
    <property type="entry name" value="G_TR_2"/>
    <property type="match status" value="1"/>
</dbReference>
<dbReference type="PROSITE" id="PS01176">
    <property type="entry name" value="IF2"/>
    <property type="match status" value="1"/>
</dbReference>
<name>IF2_SALAR</name>
<accession>A9MP36</accession>
<sequence>MTDVTVKALAAERQVSVDRLVQQFADAGIRKSADDSVSAQEKQTLLAHLNREAGSGPDKLTLQRKTRSTLNIPGTGGKSKSVQIEVRKKRTFVKRDPQEAERLAAEEQAQREAEEQARREAEEQAKREAQQKAEREAAEQAKREAAEKAKREAAEKDKVSNQQTDDMTKTAQAEKARRENEAAELKRKAEEEARRKLEEEARRVAEEARRMAEENKWTATPEPVEDTSDYHVTTSQHARQAEDESDREVEGGRGRGRNAKAARPAKKGNKHAESKADREEARAAVRGGKGGKRKGSSLQQGFQKPVQAVNRDVVIGETITVGELANKMAVKGSQVIKAMMKLGAMATINQVIDQETAQLVAEEMGHKVILRRENELEEAVMSDRDTGAAAEPRAPVVTIMGHVDHGKTSLLDYIRSTKVASGEAGGITQHIGAYHVETDNGMITFLDTPGHAAFTSMRARGAQATDIVVLVVAADDGVMPQTIEAIQHAKAAGVPVVVAVNKIDKPEADPDRVKNELSQYGILPEEWGGESQFVHVSAKAGTGIDELLDAILLQAEVLELKAVRKGMASGAVIESFLDKGRGPVATVLVREGTLHKGDIVLCGFEYGRVRAMRNELGQEVLEAGPSIPVEILGLSGVPAAGDEVTVVRDEKKAREVALYRQGKFREVKLARQQKSKLENMFANMTEGEVHEVNIVLKADVQGSVEAISDSLLKLSTDEVKVKIIGSGVGGITETDATLAAASNAILVGFNVRADASARKVIESESLDLRYYSVIYNLIDEVKAAMSGMLSPELKQQIIGLAEVRDVFKSPKFGAIAGCMVTEGVVKRHNPIRVLRDNVVIYEGELESLRRFKDDVNEVRNGMECGIGVKNYNDVRAGDMIEVFEIIEIQRTIA</sequence>
<gene>
    <name evidence="2" type="primary">infB</name>
    <name type="ordered locus">SARI_04338</name>
</gene>
<evidence type="ECO:0000250" key="1"/>
<evidence type="ECO:0000255" key="2">
    <source>
        <dbReference type="HAMAP-Rule" id="MF_00100"/>
    </source>
</evidence>
<evidence type="ECO:0000256" key="3">
    <source>
        <dbReference type="SAM" id="MobiDB-lite"/>
    </source>
</evidence>
<organism>
    <name type="scientific">Salmonella arizonae (strain ATCC BAA-731 / CDC346-86 / RSK2980)</name>
    <dbReference type="NCBI Taxonomy" id="41514"/>
    <lineage>
        <taxon>Bacteria</taxon>
        <taxon>Pseudomonadati</taxon>
        <taxon>Pseudomonadota</taxon>
        <taxon>Gammaproteobacteria</taxon>
        <taxon>Enterobacterales</taxon>
        <taxon>Enterobacteriaceae</taxon>
        <taxon>Salmonella</taxon>
    </lineage>
</organism>
<protein>
    <recommendedName>
        <fullName evidence="2">Translation initiation factor IF-2</fullName>
    </recommendedName>
</protein>
<keyword id="KW-0963">Cytoplasm</keyword>
<keyword id="KW-0342">GTP-binding</keyword>
<keyword id="KW-0396">Initiation factor</keyword>
<keyword id="KW-0547">Nucleotide-binding</keyword>
<keyword id="KW-0648">Protein biosynthesis</keyword>
<keyword id="KW-1185">Reference proteome</keyword>
<proteinExistence type="inferred from homology"/>
<comment type="function">
    <text evidence="2">One of the essential components for the initiation of protein synthesis. Protects formylmethionyl-tRNA from spontaneous hydrolysis and promotes its binding to the 30S ribosomal subunits. Also involved in the hydrolysis of GTP during the formation of the 70S ribosomal complex.</text>
</comment>
<comment type="subcellular location">
    <subcellularLocation>
        <location evidence="2">Cytoplasm</location>
    </subcellularLocation>
</comment>
<comment type="similarity">
    <text evidence="2">Belongs to the TRAFAC class translation factor GTPase superfamily. Classic translation factor GTPase family. IF-2 subfamily.</text>
</comment>